<gene>
    <name type="primary">GEM1</name>
    <name type="ordered locus">CAGL0M12276g</name>
</gene>
<reference key="1">
    <citation type="journal article" date="2004" name="Nature">
        <title>Genome evolution in yeasts.</title>
        <authorList>
            <person name="Dujon B."/>
            <person name="Sherman D."/>
            <person name="Fischer G."/>
            <person name="Durrens P."/>
            <person name="Casaregola S."/>
            <person name="Lafontaine I."/>
            <person name="de Montigny J."/>
            <person name="Marck C."/>
            <person name="Neuveglise C."/>
            <person name="Talla E."/>
            <person name="Goffard N."/>
            <person name="Frangeul L."/>
            <person name="Aigle M."/>
            <person name="Anthouard V."/>
            <person name="Babour A."/>
            <person name="Barbe V."/>
            <person name="Barnay S."/>
            <person name="Blanchin S."/>
            <person name="Beckerich J.-M."/>
            <person name="Beyne E."/>
            <person name="Bleykasten C."/>
            <person name="Boisrame A."/>
            <person name="Boyer J."/>
            <person name="Cattolico L."/>
            <person name="Confanioleri F."/>
            <person name="de Daruvar A."/>
            <person name="Despons L."/>
            <person name="Fabre E."/>
            <person name="Fairhead C."/>
            <person name="Ferry-Dumazet H."/>
            <person name="Groppi A."/>
            <person name="Hantraye F."/>
            <person name="Hennequin C."/>
            <person name="Jauniaux N."/>
            <person name="Joyet P."/>
            <person name="Kachouri R."/>
            <person name="Kerrest A."/>
            <person name="Koszul R."/>
            <person name="Lemaire M."/>
            <person name="Lesur I."/>
            <person name="Ma L."/>
            <person name="Muller H."/>
            <person name="Nicaud J.-M."/>
            <person name="Nikolski M."/>
            <person name="Oztas S."/>
            <person name="Ozier-Kalogeropoulos O."/>
            <person name="Pellenz S."/>
            <person name="Potier S."/>
            <person name="Richard G.-F."/>
            <person name="Straub M.-L."/>
            <person name="Suleau A."/>
            <person name="Swennen D."/>
            <person name="Tekaia F."/>
            <person name="Wesolowski-Louvel M."/>
            <person name="Westhof E."/>
            <person name="Wirth B."/>
            <person name="Zeniou-Meyer M."/>
            <person name="Zivanovic Y."/>
            <person name="Bolotin-Fukuhara M."/>
            <person name="Thierry A."/>
            <person name="Bouchier C."/>
            <person name="Caudron B."/>
            <person name="Scarpelli C."/>
            <person name="Gaillardin C."/>
            <person name="Weissenbach J."/>
            <person name="Wincker P."/>
            <person name="Souciet J.-L."/>
        </authorList>
    </citation>
    <scope>NUCLEOTIDE SEQUENCE [LARGE SCALE GENOMIC DNA]</scope>
    <source>
        <strain>ATCC 2001 / BCRC 20586 / JCM 3761 / NBRC 0622 / NRRL Y-65 / CBS 138</strain>
    </source>
</reference>
<proteinExistence type="inferred from homology"/>
<protein>
    <recommendedName>
        <fullName>Mitochondrial Rho GTPase 1</fullName>
        <ecNumber>3.6.5.-</ecNumber>
    </recommendedName>
    <alternativeName>
        <fullName>GTPase EF-hand protein of mitochondria 1</fullName>
    </alternativeName>
</protein>
<dbReference type="EC" id="3.6.5.-"/>
<dbReference type="EMBL" id="CR380959">
    <property type="protein sequence ID" value="CAG62856.1"/>
    <property type="molecule type" value="Genomic_DNA"/>
</dbReference>
<dbReference type="RefSeq" id="XP_449876.1">
    <property type="nucleotide sequence ID" value="XM_449876.1"/>
</dbReference>
<dbReference type="SMR" id="Q6FIR8"/>
<dbReference type="FunCoup" id="Q6FIR8">
    <property type="interactions" value="841"/>
</dbReference>
<dbReference type="STRING" id="284593.Q6FIR8"/>
<dbReference type="EnsemblFungi" id="CAGL0M12276g-T">
    <property type="protein sequence ID" value="CAGL0M12276g-T-p1"/>
    <property type="gene ID" value="CAGL0M12276g"/>
</dbReference>
<dbReference type="KEGG" id="cgr:2891426"/>
<dbReference type="CGD" id="CAL0136929">
    <property type="gene designation" value="GEM1"/>
</dbReference>
<dbReference type="VEuPathDB" id="FungiDB:B1J91_M12276g"/>
<dbReference type="VEuPathDB" id="FungiDB:CAGL0M12276g"/>
<dbReference type="eggNOG" id="KOG1707">
    <property type="taxonomic scope" value="Eukaryota"/>
</dbReference>
<dbReference type="HOGENOM" id="CLU_014255_3_0_1"/>
<dbReference type="InParanoid" id="Q6FIR8"/>
<dbReference type="OMA" id="HETTWGI"/>
<dbReference type="Proteomes" id="UP000002428">
    <property type="component" value="Chromosome M"/>
</dbReference>
<dbReference type="GO" id="GO:0032865">
    <property type="term" value="C:ERMES complex"/>
    <property type="evidence" value="ECO:0000314"/>
    <property type="project" value="CGD"/>
</dbReference>
<dbReference type="GO" id="GO:0005741">
    <property type="term" value="C:mitochondrial outer membrane"/>
    <property type="evidence" value="ECO:0000314"/>
    <property type="project" value="CGD"/>
</dbReference>
<dbReference type="GO" id="GO:0005509">
    <property type="term" value="F:calcium ion binding"/>
    <property type="evidence" value="ECO:0007669"/>
    <property type="project" value="EnsemblFungi"/>
</dbReference>
<dbReference type="GO" id="GO:0005525">
    <property type="term" value="F:GTP binding"/>
    <property type="evidence" value="ECO:0007669"/>
    <property type="project" value="UniProtKB-KW"/>
</dbReference>
<dbReference type="GO" id="GO:0003924">
    <property type="term" value="F:GTPase activity"/>
    <property type="evidence" value="ECO:0000315"/>
    <property type="project" value="CGD"/>
</dbReference>
<dbReference type="GO" id="GO:0015886">
    <property type="term" value="P:heme transport"/>
    <property type="evidence" value="ECO:0007669"/>
    <property type="project" value="EnsemblFungi"/>
</dbReference>
<dbReference type="GO" id="GO:0000001">
    <property type="term" value="P:mitochondrion inheritance"/>
    <property type="evidence" value="ECO:0007669"/>
    <property type="project" value="EnsemblFungi"/>
</dbReference>
<dbReference type="GO" id="GO:0007005">
    <property type="term" value="P:mitochondrion organization"/>
    <property type="evidence" value="ECO:0000315"/>
    <property type="project" value="CGD"/>
</dbReference>
<dbReference type="GO" id="GO:1990456">
    <property type="term" value="P:mitochondrion-endoplasmic reticulum membrane tethering"/>
    <property type="evidence" value="ECO:0007669"/>
    <property type="project" value="EnsemblFungi"/>
</dbReference>
<dbReference type="GO" id="GO:0055091">
    <property type="term" value="P:phospholipid homeostasis"/>
    <property type="evidence" value="ECO:0007669"/>
    <property type="project" value="EnsemblFungi"/>
</dbReference>
<dbReference type="GO" id="GO:0010821">
    <property type="term" value="P:regulation of mitochondrion organization"/>
    <property type="evidence" value="ECO:0007669"/>
    <property type="project" value="EnsemblFungi"/>
</dbReference>
<dbReference type="GO" id="GO:0007264">
    <property type="term" value="P:small GTPase-mediated signal transduction"/>
    <property type="evidence" value="ECO:0007669"/>
    <property type="project" value="InterPro"/>
</dbReference>
<dbReference type="CDD" id="cd01892">
    <property type="entry name" value="Miro2"/>
    <property type="match status" value="1"/>
</dbReference>
<dbReference type="FunFam" id="3.40.50.300:FF:000553">
    <property type="entry name" value="Mitochondrial Rho GTPase"/>
    <property type="match status" value="1"/>
</dbReference>
<dbReference type="Gene3D" id="1.10.238.10">
    <property type="entry name" value="EF-hand"/>
    <property type="match status" value="2"/>
</dbReference>
<dbReference type="Gene3D" id="3.40.50.300">
    <property type="entry name" value="P-loop containing nucleotide triphosphate hydrolases"/>
    <property type="match status" value="2"/>
</dbReference>
<dbReference type="InterPro" id="IPR011992">
    <property type="entry name" value="EF-hand-dom_pair"/>
</dbReference>
<dbReference type="InterPro" id="IPR018247">
    <property type="entry name" value="EF_Hand_1_Ca_BS"/>
</dbReference>
<dbReference type="InterPro" id="IPR013566">
    <property type="entry name" value="EF_hand_assoc_1"/>
</dbReference>
<dbReference type="InterPro" id="IPR013567">
    <property type="entry name" value="EF_hand_assoc_2"/>
</dbReference>
<dbReference type="InterPro" id="IPR002048">
    <property type="entry name" value="EF_hand_dom"/>
</dbReference>
<dbReference type="InterPro" id="IPR021181">
    <property type="entry name" value="Miro"/>
</dbReference>
<dbReference type="InterPro" id="IPR020860">
    <property type="entry name" value="MIRO_dom"/>
</dbReference>
<dbReference type="InterPro" id="IPR027417">
    <property type="entry name" value="P-loop_NTPase"/>
</dbReference>
<dbReference type="InterPro" id="IPR001806">
    <property type="entry name" value="Small_GTPase"/>
</dbReference>
<dbReference type="InterPro" id="IPR003578">
    <property type="entry name" value="Small_GTPase_Rho"/>
</dbReference>
<dbReference type="PANTHER" id="PTHR24072">
    <property type="entry name" value="RHO FAMILY GTPASE"/>
    <property type="match status" value="1"/>
</dbReference>
<dbReference type="Pfam" id="PF08355">
    <property type="entry name" value="EF_assoc_1"/>
    <property type="match status" value="1"/>
</dbReference>
<dbReference type="Pfam" id="PF08356">
    <property type="entry name" value="EF_assoc_2"/>
    <property type="match status" value="1"/>
</dbReference>
<dbReference type="Pfam" id="PF00071">
    <property type="entry name" value="Ras"/>
    <property type="match status" value="2"/>
</dbReference>
<dbReference type="PIRSF" id="PIRSF037488">
    <property type="entry name" value="Mt_Rho_GTPase"/>
    <property type="match status" value="1"/>
</dbReference>
<dbReference type="PRINTS" id="PR00449">
    <property type="entry name" value="RASTRNSFRMNG"/>
</dbReference>
<dbReference type="SMART" id="SM00054">
    <property type="entry name" value="EFh"/>
    <property type="match status" value="2"/>
</dbReference>
<dbReference type="SMART" id="SM00175">
    <property type="entry name" value="RAB"/>
    <property type="match status" value="1"/>
</dbReference>
<dbReference type="SMART" id="SM00173">
    <property type="entry name" value="RAS"/>
    <property type="match status" value="1"/>
</dbReference>
<dbReference type="SMART" id="SM00174">
    <property type="entry name" value="RHO"/>
    <property type="match status" value="1"/>
</dbReference>
<dbReference type="SUPFAM" id="SSF47473">
    <property type="entry name" value="EF-hand"/>
    <property type="match status" value="1"/>
</dbReference>
<dbReference type="SUPFAM" id="SSF52540">
    <property type="entry name" value="P-loop containing nucleoside triphosphate hydrolases"/>
    <property type="match status" value="2"/>
</dbReference>
<dbReference type="PROSITE" id="PS00018">
    <property type="entry name" value="EF_HAND_1"/>
    <property type="match status" value="2"/>
</dbReference>
<dbReference type="PROSITE" id="PS50222">
    <property type="entry name" value="EF_HAND_2"/>
    <property type="match status" value="2"/>
</dbReference>
<dbReference type="PROSITE" id="PS51423">
    <property type="entry name" value="MIRO"/>
    <property type="match status" value="2"/>
</dbReference>
<sequence>MTKETIRVVICGDDGVGKTSLIVSLVKGQFIPNLQAVLPPVTIPRDFSSSPYSPKNTVLIDTDNSDPLAIQRELKNADVIWLVYSDKDSYERISLYWMITFRSLGLNIPVILCKNKCDQYTTNSPLEDFLDTKIEDEEFIPILMAFKEVDTCVKASAKTHFDVNQSFYLCQRSISYPISPLFDAKVGDLKPSAVAALSRIFFLSDEDQDGFLNDNEIMDLQRKCFGKSIDLNELNFIKHTLSDLTSSEEYPSEILYCQGKGLTKQGFIALNKIYTEKGRHETTWGILRAFNYTDSLSIDDAVLFPKVNVPEQASVELSSKGYRFLVDIFIKFDSDNDGALNDTELHTLFRSTPGLPNLWLETNFPASTVVNAKGFVTLQGWLAQWTMTTYLDYKITTAYLVYLGFQEDAKLAVQITKSRRMRRRQGRLYRSYVTDRKVFNCFVVGKRNSGKSSLLESFLGRLFSEAYSPTIRPRVAVNNVEVTGDKQYYLILQEFGEQEEAILQNPSRLAECDVLCLTYDSSDPESFSYLLELLTNNEIMKDIPVVFVALKADLDKQQQRCKFQPDEFTDTLYLDHPLHVSSTWSSSLNQLFKKIIQASLEPGKFTPGFPPDIKPTNIDYSSAVILGSSIGFLALFSYTMIKLLKPTQQ</sequence>
<name>GEM1_CANGA</name>
<keyword id="KW-0106">Calcium</keyword>
<keyword id="KW-0342">GTP-binding</keyword>
<keyword id="KW-0378">Hydrolase</keyword>
<keyword id="KW-0472">Membrane</keyword>
<keyword id="KW-0479">Metal-binding</keyword>
<keyword id="KW-0496">Mitochondrion</keyword>
<keyword id="KW-1000">Mitochondrion outer membrane</keyword>
<keyword id="KW-0547">Nucleotide-binding</keyword>
<keyword id="KW-1185">Reference proteome</keyword>
<keyword id="KW-0677">Repeat</keyword>
<keyword id="KW-0812">Transmembrane</keyword>
<keyword id="KW-1133">Transmembrane helix</keyword>
<feature type="chain" id="PRO_0000239333" description="Mitochondrial Rho GTPase 1">
    <location>
        <begin position="1"/>
        <end position="649"/>
    </location>
</feature>
<feature type="topological domain" description="Cytoplasmic" evidence="2">
    <location>
        <begin position="1"/>
        <end position="623"/>
    </location>
</feature>
<feature type="transmembrane region" description="Helical; Anchor for type IV membrane protein" evidence="2">
    <location>
        <begin position="624"/>
        <end position="644"/>
    </location>
</feature>
<feature type="topological domain" description="Mitochondrial intermembrane" evidence="2">
    <location>
        <begin position="645"/>
        <end position="649"/>
    </location>
</feature>
<feature type="domain" description="Miro 1" evidence="4">
    <location>
        <begin position="3"/>
        <end position="176"/>
    </location>
</feature>
<feature type="domain" description="EF-hand 1" evidence="3">
    <location>
        <begin position="192"/>
        <end position="227"/>
    </location>
</feature>
<feature type="domain" description="EF-hand 2" evidence="3">
    <location>
        <begin position="320"/>
        <end position="355"/>
    </location>
</feature>
<feature type="domain" description="Miro 2" evidence="4">
    <location>
        <begin position="436"/>
        <end position="601"/>
    </location>
</feature>
<feature type="binding site" evidence="2">
    <location>
        <begin position="12"/>
        <end position="19"/>
    </location>
    <ligand>
        <name>GTP</name>
        <dbReference type="ChEBI" id="CHEBI:37565"/>
        <label>1</label>
    </ligand>
</feature>
<feature type="binding site" evidence="2">
    <location>
        <begin position="61"/>
        <end position="63"/>
    </location>
    <ligand>
        <name>GTP</name>
        <dbReference type="ChEBI" id="CHEBI:37565"/>
        <label>1</label>
    </ligand>
</feature>
<feature type="binding site" evidence="2">
    <location>
        <begin position="115"/>
        <end position="118"/>
    </location>
    <ligand>
        <name>GTP</name>
        <dbReference type="ChEBI" id="CHEBI:37565"/>
        <label>1</label>
    </ligand>
</feature>
<feature type="binding site" evidence="3">
    <location>
        <position position="205"/>
    </location>
    <ligand>
        <name>Ca(2+)</name>
        <dbReference type="ChEBI" id="CHEBI:29108"/>
        <label>1</label>
    </ligand>
</feature>
<feature type="binding site" evidence="3">
    <location>
        <position position="207"/>
    </location>
    <ligand>
        <name>Ca(2+)</name>
        <dbReference type="ChEBI" id="CHEBI:29108"/>
        <label>1</label>
    </ligand>
</feature>
<feature type="binding site" evidence="3">
    <location>
        <position position="209"/>
    </location>
    <ligand>
        <name>Ca(2+)</name>
        <dbReference type="ChEBI" id="CHEBI:29108"/>
        <label>1</label>
    </ligand>
</feature>
<feature type="binding site" evidence="3">
    <location>
        <position position="216"/>
    </location>
    <ligand>
        <name>Ca(2+)</name>
        <dbReference type="ChEBI" id="CHEBI:29108"/>
        <label>1</label>
    </ligand>
</feature>
<feature type="binding site" evidence="3">
    <location>
        <position position="333"/>
    </location>
    <ligand>
        <name>Ca(2+)</name>
        <dbReference type="ChEBI" id="CHEBI:29108"/>
        <label>2</label>
    </ligand>
</feature>
<feature type="binding site" evidence="3">
    <location>
        <position position="335"/>
    </location>
    <ligand>
        <name>Ca(2+)</name>
        <dbReference type="ChEBI" id="CHEBI:29108"/>
        <label>2</label>
    </ligand>
</feature>
<feature type="binding site" evidence="3">
    <location>
        <position position="337"/>
    </location>
    <ligand>
        <name>Ca(2+)</name>
        <dbReference type="ChEBI" id="CHEBI:29108"/>
        <label>2</label>
    </ligand>
</feature>
<feature type="binding site" evidence="3">
    <location>
        <position position="344"/>
    </location>
    <ligand>
        <name>Ca(2+)</name>
        <dbReference type="ChEBI" id="CHEBI:29108"/>
        <label>2</label>
    </ligand>
</feature>
<feature type="binding site" evidence="2">
    <location>
        <begin position="445"/>
        <end position="452"/>
    </location>
    <ligand>
        <name>GTP</name>
        <dbReference type="ChEBI" id="CHEBI:37565"/>
        <label>2</label>
    </ligand>
</feature>
<feature type="binding site" evidence="2">
    <location>
        <begin position="481"/>
        <end position="485"/>
    </location>
    <ligand>
        <name>GTP</name>
        <dbReference type="ChEBI" id="CHEBI:37565"/>
        <label>2</label>
    </ligand>
</feature>
<feature type="binding site" evidence="2">
    <location>
        <begin position="550"/>
        <end position="553"/>
    </location>
    <ligand>
        <name>GTP</name>
        <dbReference type="ChEBI" id="CHEBI:37565"/>
        <label>2</label>
    </ligand>
</feature>
<evidence type="ECO:0000250" key="1">
    <source>
        <dbReference type="UniProtKB" id="P39722"/>
    </source>
</evidence>
<evidence type="ECO:0000255" key="2"/>
<evidence type="ECO:0000255" key="3">
    <source>
        <dbReference type="PROSITE-ProRule" id="PRU00448"/>
    </source>
</evidence>
<evidence type="ECO:0000255" key="4">
    <source>
        <dbReference type="PROSITE-ProRule" id="PRU00757"/>
    </source>
</evidence>
<evidence type="ECO:0000305" key="5"/>
<organism>
    <name type="scientific">Candida glabrata (strain ATCC 2001 / BCRC 20586 / JCM 3761 / NBRC 0622 / NRRL Y-65 / CBS 138)</name>
    <name type="common">Yeast</name>
    <name type="synonym">Nakaseomyces glabratus</name>
    <dbReference type="NCBI Taxonomy" id="284593"/>
    <lineage>
        <taxon>Eukaryota</taxon>
        <taxon>Fungi</taxon>
        <taxon>Dikarya</taxon>
        <taxon>Ascomycota</taxon>
        <taxon>Saccharomycotina</taxon>
        <taxon>Saccharomycetes</taxon>
        <taxon>Saccharomycetales</taxon>
        <taxon>Saccharomycetaceae</taxon>
        <taxon>Nakaseomyces</taxon>
    </lineage>
</organism>
<comment type="function">
    <text evidence="1">Mitochondrial GTPase involved in mitochondrial trafficking. Probably involved in control of anterograde transport of mitochondria and their subcellular distribution.</text>
</comment>
<comment type="subcellular location">
    <subcellularLocation>
        <location evidence="1">Mitochondrion outer membrane</location>
        <topology evidence="1">Single-pass type IV membrane protein</topology>
    </subcellularLocation>
</comment>
<comment type="similarity">
    <text evidence="4 5">Belongs to the mitochondrial Rho GTPase family.</text>
</comment>
<accession>Q6FIR8</accession>